<accession>Q8FHB4</accession>
<name>MDTJ_ECOL6</name>
<proteinExistence type="inferred from homology"/>
<organism>
    <name type="scientific">Escherichia coli O6:H1 (strain CFT073 / ATCC 700928 / UPEC)</name>
    <dbReference type="NCBI Taxonomy" id="199310"/>
    <lineage>
        <taxon>Bacteria</taxon>
        <taxon>Pseudomonadati</taxon>
        <taxon>Pseudomonadota</taxon>
        <taxon>Gammaproteobacteria</taxon>
        <taxon>Enterobacterales</taxon>
        <taxon>Enterobacteriaceae</taxon>
        <taxon>Escherichia</taxon>
    </lineage>
</organism>
<gene>
    <name type="primary">mdtJ</name>
    <name type="ordered locus">c1992</name>
</gene>
<dbReference type="EMBL" id="AE014075">
    <property type="protein sequence ID" value="AAN80452.1"/>
    <property type="molecule type" value="Genomic_DNA"/>
</dbReference>
<dbReference type="RefSeq" id="WP_000276156.1">
    <property type="nucleotide sequence ID" value="NZ_CP051263.1"/>
</dbReference>
<dbReference type="SMR" id="Q8FHB4"/>
<dbReference type="STRING" id="199310.c1992"/>
<dbReference type="KEGG" id="ecc:c1992"/>
<dbReference type="eggNOG" id="COG2076">
    <property type="taxonomic scope" value="Bacteria"/>
</dbReference>
<dbReference type="HOGENOM" id="CLU_133067_0_0_6"/>
<dbReference type="BioCyc" id="ECOL199310:C1992-MONOMER"/>
<dbReference type="Proteomes" id="UP000001410">
    <property type="component" value="Chromosome"/>
</dbReference>
<dbReference type="GO" id="GO:0005886">
    <property type="term" value="C:plasma membrane"/>
    <property type="evidence" value="ECO:0007669"/>
    <property type="project" value="UniProtKB-SubCell"/>
</dbReference>
<dbReference type="GO" id="GO:0015199">
    <property type="term" value="F:amino-acid betaine transmembrane transporter activity"/>
    <property type="evidence" value="ECO:0007669"/>
    <property type="project" value="TreeGrafter"/>
</dbReference>
<dbReference type="GO" id="GO:0015297">
    <property type="term" value="F:antiporter activity"/>
    <property type="evidence" value="ECO:0007669"/>
    <property type="project" value="TreeGrafter"/>
</dbReference>
<dbReference type="GO" id="GO:0015220">
    <property type="term" value="F:choline transmembrane transporter activity"/>
    <property type="evidence" value="ECO:0007669"/>
    <property type="project" value="TreeGrafter"/>
</dbReference>
<dbReference type="GO" id="GO:0015606">
    <property type="term" value="F:spermidine transmembrane transporter activity"/>
    <property type="evidence" value="ECO:0007669"/>
    <property type="project" value="UniProtKB-UniRule"/>
</dbReference>
<dbReference type="GO" id="GO:0031460">
    <property type="term" value="P:glycine betaine transport"/>
    <property type="evidence" value="ECO:0007669"/>
    <property type="project" value="TreeGrafter"/>
</dbReference>
<dbReference type="FunFam" id="1.10.3730.20:FF:000001">
    <property type="entry name" value="Quaternary ammonium compound resistance transporter SugE"/>
    <property type="match status" value="1"/>
</dbReference>
<dbReference type="Gene3D" id="1.10.3730.20">
    <property type="match status" value="1"/>
</dbReference>
<dbReference type="HAMAP" id="MF_01598">
    <property type="entry name" value="MdtJ"/>
    <property type="match status" value="1"/>
</dbReference>
<dbReference type="InterPro" id="IPR000390">
    <property type="entry name" value="Small_drug/metabolite_transptr"/>
</dbReference>
<dbReference type="InterPro" id="IPR045324">
    <property type="entry name" value="Small_multidrug_res"/>
</dbReference>
<dbReference type="InterPro" id="IPR023740">
    <property type="entry name" value="Spermidine_export_MdtJ"/>
</dbReference>
<dbReference type="NCBIfam" id="NF007767">
    <property type="entry name" value="PRK10452.1"/>
    <property type="match status" value="1"/>
</dbReference>
<dbReference type="PANTHER" id="PTHR30561">
    <property type="entry name" value="SMR FAMILY PROTON-DEPENDENT DRUG EFFLUX TRANSPORTER SUGE"/>
    <property type="match status" value="1"/>
</dbReference>
<dbReference type="PANTHER" id="PTHR30561:SF2">
    <property type="entry name" value="SPERMIDINE EXPORT PROTEIN MDTJ"/>
    <property type="match status" value="1"/>
</dbReference>
<dbReference type="Pfam" id="PF00893">
    <property type="entry name" value="Multi_Drug_Res"/>
    <property type="match status" value="1"/>
</dbReference>
<dbReference type="SUPFAM" id="SSF103481">
    <property type="entry name" value="Multidrug resistance efflux transporter EmrE"/>
    <property type="match status" value="1"/>
</dbReference>
<sequence length="121" mass="13101">MYIYWILLGLAVATEITGTLSMKWASVSEGNGGFILMLVMISLSYIFLSFAVKKIALGVAYALWEGIGILFITLFSVLLFDESLSLMKIAGLTTLVAGIVLIKSGTRKARKPELEVNHGAV</sequence>
<comment type="function">
    <text evidence="1">Catalyzes the excretion of spermidine.</text>
</comment>
<comment type="subunit">
    <text evidence="1">Forms a complex with MdtI.</text>
</comment>
<comment type="subcellular location">
    <subcellularLocation>
        <location evidence="1">Cell inner membrane</location>
        <topology evidence="1">Multi-pass membrane protein</topology>
    </subcellularLocation>
</comment>
<comment type="similarity">
    <text evidence="3">Belongs to the drug/metabolite transporter (DMT) superfamily. Small multidrug resistance (SMR) (TC 2.A.7.1) family. MdtJ subfamily.</text>
</comment>
<evidence type="ECO:0000250" key="1"/>
<evidence type="ECO:0000255" key="2"/>
<evidence type="ECO:0000255" key="3">
    <source>
        <dbReference type="HAMAP-Rule" id="MF_01598"/>
    </source>
</evidence>
<reference key="1">
    <citation type="journal article" date="2002" name="Proc. Natl. Acad. Sci. U.S.A.">
        <title>Extensive mosaic structure revealed by the complete genome sequence of uropathogenic Escherichia coli.</title>
        <authorList>
            <person name="Welch R.A."/>
            <person name="Burland V."/>
            <person name="Plunkett G. III"/>
            <person name="Redford P."/>
            <person name="Roesch P."/>
            <person name="Rasko D."/>
            <person name="Buckles E.L."/>
            <person name="Liou S.-R."/>
            <person name="Boutin A."/>
            <person name="Hackett J."/>
            <person name="Stroud D."/>
            <person name="Mayhew G.F."/>
            <person name="Rose D.J."/>
            <person name="Zhou S."/>
            <person name="Schwartz D.C."/>
            <person name="Perna N.T."/>
            <person name="Mobley H.L.T."/>
            <person name="Donnenberg M.S."/>
            <person name="Blattner F.R."/>
        </authorList>
    </citation>
    <scope>NUCLEOTIDE SEQUENCE [LARGE SCALE GENOMIC DNA]</scope>
    <source>
        <strain>CFT073 / ATCC 700928 / UPEC</strain>
    </source>
</reference>
<protein>
    <recommendedName>
        <fullName>Spermidine export protein MdtJ</fullName>
    </recommendedName>
</protein>
<keyword id="KW-0997">Cell inner membrane</keyword>
<keyword id="KW-1003">Cell membrane</keyword>
<keyword id="KW-0472">Membrane</keyword>
<keyword id="KW-1185">Reference proteome</keyword>
<keyword id="KW-0812">Transmembrane</keyword>
<keyword id="KW-1133">Transmembrane helix</keyword>
<keyword id="KW-0813">Transport</keyword>
<feature type="chain" id="PRO_0000108080" description="Spermidine export protein MdtJ">
    <location>
        <begin position="1"/>
        <end position="121"/>
    </location>
</feature>
<feature type="topological domain" description="Cytoplasmic" evidence="2">
    <location>
        <position position="1"/>
    </location>
</feature>
<feature type="transmembrane region" description="Helical" evidence="2">
    <location>
        <begin position="2"/>
        <end position="22"/>
    </location>
</feature>
<feature type="topological domain" description="Periplasmic" evidence="2">
    <location>
        <begin position="23"/>
        <end position="31"/>
    </location>
</feature>
<feature type="transmembrane region" description="Helical" evidence="2">
    <location>
        <begin position="32"/>
        <end position="52"/>
    </location>
</feature>
<feature type="topological domain" description="Cytoplasmic" evidence="2">
    <location>
        <begin position="53"/>
        <end position="54"/>
    </location>
</feature>
<feature type="transmembrane region" description="Helical" evidence="2">
    <location>
        <begin position="55"/>
        <end position="75"/>
    </location>
</feature>
<feature type="topological domain" description="Periplasmic" evidence="2">
    <location>
        <begin position="76"/>
        <end position="81"/>
    </location>
</feature>
<feature type="transmembrane region" description="Helical" evidence="2">
    <location>
        <begin position="82"/>
        <end position="102"/>
    </location>
</feature>
<feature type="topological domain" description="Cytoplasmic" evidence="2">
    <location>
        <begin position="103"/>
        <end position="121"/>
    </location>
</feature>